<organism>
    <name type="scientific">Mycoplasma pneumoniae (strain ATCC 29342 / M129 / Subtype 1)</name>
    <name type="common">Mycoplasmoides pneumoniae</name>
    <dbReference type="NCBI Taxonomy" id="272634"/>
    <lineage>
        <taxon>Bacteria</taxon>
        <taxon>Bacillati</taxon>
        <taxon>Mycoplasmatota</taxon>
        <taxon>Mycoplasmoidales</taxon>
        <taxon>Mycoplasmoidaceae</taxon>
        <taxon>Mycoplasmoides</taxon>
    </lineage>
</organism>
<evidence type="ECO:0000250" key="1">
    <source>
        <dbReference type="UniProtKB" id="P24139"/>
    </source>
</evidence>
<evidence type="ECO:0000255" key="2"/>
<evidence type="ECO:0000255" key="3">
    <source>
        <dbReference type="PROSITE-ProRule" id="PRU00441"/>
    </source>
</evidence>
<evidence type="ECO:0000305" key="4"/>
<comment type="function">
    <text evidence="1">Part of the ABC transporter complex OppABCDF involved in the uptake of oligopeptides (By similarity). Probably responsible for the translocation of the substrate across the membrane (By similarity).</text>
</comment>
<comment type="subunit">
    <text evidence="1">The complex is composed of two ATP-binding proteins (OppD and OppF), two transmembrane proteins (OppB and OppC) and a solute-binding protein (OppA).</text>
</comment>
<comment type="subcellular location">
    <subcellularLocation>
        <location evidence="1">Cell membrane</location>
        <topology evidence="2">Multi-pass membrane protein</topology>
    </subcellularLocation>
</comment>
<comment type="similarity">
    <text evidence="4">Belongs to the binding-protein-dependent transport system permease family. OppBC subfamily.</text>
</comment>
<reference key="1">
    <citation type="journal article" date="1996" name="Nucleic Acids Res.">
        <title>Complete sequence analysis of the genome of the bacterium Mycoplasma pneumoniae.</title>
        <authorList>
            <person name="Himmelreich R."/>
            <person name="Hilbert H."/>
            <person name="Plagens H."/>
            <person name="Pirkl E."/>
            <person name="Li B.-C."/>
            <person name="Herrmann R."/>
        </authorList>
    </citation>
    <scope>NUCLEOTIDE SEQUENCE [LARGE SCALE GENOMIC DNA]</scope>
    <source>
        <strain>ATCC 29342 / M129 / Subtype 1</strain>
    </source>
</reference>
<dbReference type="EMBL" id="U00089">
    <property type="protein sequence ID" value="AAB96263.1"/>
    <property type="molecule type" value="Genomic_DNA"/>
</dbReference>
<dbReference type="PIR" id="S73941">
    <property type="entry name" value="S73941"/>
</dbReference>
<dbReference type="RefSeq" id="NP_109904.1">
    <property type="nucleotide sequence ID" value="NC_000912.1"/>
</dbReference>
<dbReference type="RefSeq" id="WP_010874573.1">
    <property type="nucleotide sequence ID" value="NZ_OU342337.1"/>
</dbReference>
<dbReference type="SMR" id="P75553"/>
<dbReference type="IntAct" id="P75553">
    <property type="interactions" value="1"/>
</dbReference>
<dbReference type="STRING" id="272634.MPN_216"/>
<dbReference type="EnsemblBacteria" id="AAB96263">
    <property type="protein sequence ID" value="AAB96263"/>
    <property type="gene ID" value="MPN_216"/>
</dbReference>
<dbReference type="KEGG" id="mpn:MPN_216"/>
<dbReference type="PATRIC" id="fig|272634.6.peg.235"/>
<dbReference type="HOGENOM" id="CLU_028518_1_0_14"/>
<dbReference type="OrthoDB" id="9788103at2"/>
<dbReference type="BioCyc" id="MPNE272634:G1GJ3-349-MONOMER"/>
<dbReference type="Proteomes" id="UP000000808">
    <property type="component" value="Chromosome"/>
</dbReference>
<dbReference type="GO" id="GO:0005886">
    <property type="term" value="C:plasma membrane"/>
    <property type="evidence" value="ECO:0007669"/>
    <property type="project" value="UniProtKB-SubCell"/>
</dbReference>
<dbReference type="GO" id="GO:0015833">
    <property type="term" value="P:peptide transport"/>
    <property type="evidence" value="ECO:0007669"/>
    <property type="project" value="UniProtKB-KW"/>
</dbReference>
<dbReference type="GO" id="GO:0015031">
    <property type="term" value="P:protein transport"/>
    <property type="evidence" value="ECO:0007669"/>
    <property type="project" value="UniProtKB-KW"/>
</dbReference>
<dbReference type="GO" id="GO:0055085">
    <property type="term" value="P:transmembrane transport"/>
    <property type="evidence" value="ECO:0007669"/>
    <property type="project" value="InterPro"/>
</dbReference>
<dbReference type="CDD" id="cd06261">
    <property type="entry name" value="TM_PBP2"/>
    <property type="match status" value="1"/>
</dbReference>
<dbReference type="Gene3D" id="1.10.3720.10">
    <property type="entry name" value="MetI-like"/>
    <property type="match status" value="1"/>
</dbReference>
<dbReference type="InterPro" id="IPR050366">
    <property type="entry name" value="BP-dependent_transpt_permease"/>
</dbReference>
<dbReference type="InterPro" id="IPR000515">
    <property type="entry name" value="MetI-like"/>
</dbReference>
<dbReference type="InterPro" id="IPR035906">
    <property type="entry name" value="MetI-like_sf"/>
</dbReference>
<dbReference type="InterPro" id="IPR025966">
    <property type="entry name" value="OppC_N"/>
</dbReference>
<dbReference type="PANTHER" id="PTHR43386:SF24">
    <property type="entry name" value="OLIGOPEPTIDE TRANSPORT SYSTEM PERMEASE PROTEIN AMID"/>
    <property type="match status" value="1"/>
</dbReference>
<dbReference type="PANTHER" id="PTHR43386">
    <property type="entry name" value="OLIGOPEPTIDE TRANSPORT SYSTEM PERMEASE PROTEIN APPC"/>
    <property type="match status" value="1"/>
</dbReference>
<dbReference type="Pfam" id="PF00528">
    <property type="entry name" value="BPD_transp_1"/>
    <property type="match status" value="1"/>
</dbReference>
<dbReference type="Pfam" id="PF12911">
    <property type="entry name" value="OppC_N"/>
    <property type="match status" value="1"/>
</dbReference>
<dbReference type="SUPFAM" id="SSF161098">
    <property type="entry name" value="MetI-like"/>
    <property type="match status" value="1"/>
</dbReference>
<dbReference type="PROSITE" id="PS50928">
    <property type="entry name" value="ABC_TM1"/>
    <property type="match status" value="1"/>
</dbReference>
<keyword id="KW-1003">Cell membrane</keyword>
<keyword id="KW-0472">Membrane</keyword>
<keyword id="KW-0571">Peptide transport</keyword>
<keyword id="KW-0653">Protein transport</keyword>
<keyword id="KW-1185">Reference proteome</keyword>
<keyword id="KW-0812">Transmembrane</keyword>
<keyword id="KW-1133">Transmembrane helix</keyword>
<keyword id="KW-0813">Transport</keyword>
<sequence length="376" mass="41234">MDKHQKFDQSLFQRVDINVLKRSDQLIGKPTTNFVEIMKRLFQNKWAILFFLLIVLIILLAIIVPLASPYSAVTPVSNNALAQNLPPRYLWNGAGDIQVEKITARSIAEVAQSSGVLVGKLPEASSNPLATNVKYNIAPYQLAELKNYYPLLGTNGLGVDIWTLLWASMAKSLWIAIVVALVSMVFGTIYGAIAGSFVGRAADNIMSRIIEIIDLVPSILWIIVLGATFRFGGVKQFDDSVVIFTLIFVFWTWPAATTRIYILKNKDTEYIQAARTLGAKQIRIIFVHMLPVVTGRLAVVFVSLIPAVIGYEASLVFLGLKPATEVGLGALLNQVTSSGNIALITSSIVSFAILTVSTRVFANALNDAIDPRVIRR</sequence>
<gene>
    <name type="primary">oppC</name>
    <name type="ordered locus">MPN_216</name>
    <name type="ORF">MP615</name>
</gene>
<protein>
    <recommendedName>
        <fullName evidence="4">Oligopeptide transport system permease protein OppC</fullName>
    </recommendedName>
</protein>
<proteinExistence type="inferred from homology"/>
<feature type="chain" id="PRO_0000060142" description="Oligopeptide transport system permease protein OppC">
    <location>
        <begin position="1"/>
        <end position="376"/>
    </location>
</feature>
<feature type="transmembrane region" description="Helical" evidence="3">
    <location>
        <begin position="46"/>
        <end position="66"/>
    </location>
</feature>
<feature type="transmembrane region" description="Helical" evidence="3">
    <location>
        <begin position="149"/>
        <end position="169"/>
    </location>
</feature>
<feature type="transmembrane region" description="Helical" evidence="3">
    <location>
        <begin position="173"/>
        <end position="193"/>
    </location>
</feature>
<feature type="transmembrane region" description="Helical" evidence="3">
    <location>
        <begin position="209"/>
        <end position="229"/>
    </location>
</feature>
<feature type="transmembrane region" description="Helical" evidence="3">
    <location>
        <begin position="242"/>
        <end position="262"/>
    </location>
</feature>
<feature type="transmembrane region" description="Helical" evidence="3">
    <location>
        <begin position="297"/>
        <end position="317"/>
    </location>
</feature>
<feature type="transmembrane region" description="Helical" evidence="3">
    <location>
        <begin position="341"/>
        <end position="361"/>
    </location>
</feature>
<feature type="domain" description="ABC transmembrane type-1" evidence="3">
    <location>
        <begin position="169"/>
        <end position="362"/>
    </location>
</feature>
<name>OPPC_MYCPN</name>
<accession>P75553</accession>